<organism>
    <name type="scientific">Nitrobacter hamburgensis (strain DSM 10229 / NCIMB 13809 / X14)</name>
    <dbReference type="NCBI Taxonomy" id="323097"/>
    <lineage>
        <taxon>Bacteria</taxon>
        <taxon>Pseudomonadati</taxon>
        <taxon>Pseudomonadota</taxon>
        <taxon>Alphaproteobacteria</taxon>
        <taxon>Hyphomicrobiales</taxon>
        <taxon>Nitrobacteraceae</taxon>
        <taxon>Nitrobacter</taxon>
    </lineage>
</organism>
<feature type="chain" id="PRO_0000298523" description="NADH-quinone oxidoreductase subunit I">
    <location>
        <begin position="1"/>
        <end position="162"/>
    </location>
</feature>
<feature type="domain" description="4Fe-4S ferredoxin-type 1" evidence="1">
    <location>
        <begin position="52"/>
        <end position="82"/>
    </location>
</feature>
<feature type="domain" description="4Fe-4S ferredoxin-type 2" evidence="1">
    <location>
        <begin position="93"/>
        <end position="122"/>
    </location>
</feature>
<feature type="binding site" evidence="1">
    <location>
        <position position="62"/>
    </location>
    <ligand>
        <name>[4Fe-4S] cluster</name>
        <dbReference type="ChEBI" id="CHEBI:49883"/>
        <label>1</label>
    </ligand>
</feature>
<feature type="binding site" evidence="1">
    <location>
        <position position="65"/>
    </location>
    <ligand>
        <name>[4Fe-4S] cluster</name>
        <dbReference type="ChEBI" id="CHEBI:49883"/>
        <label>1</label>
    </ligand>
</feature>
<feature type="binding site" evidence="1">
    <location>
        <position position="68"/>
    </location>
    <ligand>
        <name>[4Fe-4S] cluster</name>
        <dbReference type="ChEBI" id="CHEBI:49883"/>
        <label>1</label>
    </ligand>
</feature>
<feature type="binding site" evidence="1">
    <location>
        <position position="72"/>
    </location>
    <ligand>
        <name>[4Fe-4S] cluster</name>
        <dbReference type="ChEBI" id="CHEBI:49883"/>
        <label>2</label>
    </ligand>
</feature>
<feature type="binding site" evidence="1">
    <location>
        <position position="102"/>
    </location>
    <ligand>
        <name>[4Fe-4S] cluster</name>
        <dbReference type="ChEBI" id="CHEBI:49883"/>
        <label>2</label>
    </ligand>
</feature>
<feature type="binding site" evidence="1">
    <location>
        <position position="105"/>
    </location>
    <ligand>
        <name>[4Fe-4S] cluster</name>
        <dbReference type="ChEBI" id="CHEBI:49883"/>
        <label>2</label>
    </ligand>
</feature>
<feature type="binding site" evidence="1">
    <location>
        <position position="108"/>
    </location>
    <ligand>
        <name>[4Fe-4S] cluster</name>
        <dbReference type="ChEBI" id="CHEBI:49883"/>
        <label>2</label>
    </ligand>
</feature>
<feature type="binding site" evidence="1">
    <location>
        <position position="112"/>
    </location>
    <ligand>
        <name>[4Fe-4S] cluster</name>
        <dbReference type="ChEBI" id="CHEBI:49883"/>
        <label>1</label>
    </ligand>
</feature>
<name>NUOI_NITHX</name>
<accession>Q1QL93</accession>
<reference key="1">
    <citation type="submission" date="2006-03" db="EMBL/GenBank/DDBJ databases">
        <title>Complete sequence of chromosome of Nitrobacter hamburgensis X14.</title>
        <authorList>
            <consortium name="US DOE Joint Genome Institute"/>
            <person name="Copeland A."/>
            <person name="Lucas S."/>
            <person name="Lapidus A."/>
            <person name="Barry K."/>
            <person name="Detter J.C."/>
            <person name="Glavina del Rio T."/>
            <person name="Hammon N."/>
            <person name="Israni S."/>
            <person name="Dalin E."/>
            <person name="Tice H."/>
            <person name="Pitluck S."/>
            <person name="Chain P."/>
            <person name="Malfatti S."/>
            <person name="Shin M."/>
            <person name="Vergez L."/>
            <person name="Schmutz J."/>
            <person name="Larimer F."/>
            <person name="Land M."/>
            <person name="Hauser L."/>
            <person name="Kyrpides N."/>
            <person name="Ivanova N."/>
            <person name="Ward B."/>
            <person name="Arp D."/>
            <person name="Klotz M."/>
            <person name="Stein L."/>
            <person name="O'Mullan G."/>
            <person name="Starkenburg S."/>
            <person name="Sayavedra L."/>
            <person name="Poret-Peterson A.T."/>
            <person name="Gentry M.E."/>
            <person name="Bruce D."/>
            <person name="Richardson P."/>
        </authorList>
    </citation>
    <scope>NUCLEOTIDE SEQUENCE [LARGE SCALE GENOMIC DNA]</scope>
    <source>
        <strain>DSM 10229 / NCIMB 13809 / X14</strain>
    </source>
</reference>
<keyword id="KW-0004">4Fe-4S</keyword>
<keyword id="KW-0997">Cell inner membrane</keyword>
<keyword id="KW-1003">Cell membrane</keyword>
<keyword id="KW-0408">Iron</keyword>
<keyword id="KW-0411">Iron-sulfur</keyword>
<keyword id="KW-0472">Membrane</keyword>
<keyword id="KW-0479">Metal-binding</keyword>
<keyword id="KW-0520">NAD</keyword>
<keyword id="KW-0874">Quinone</keyword>
<keyword id="KW-1185">Reference proteome</keyword>
<keyword id="KW-0677">Repeat</keyword>
<keyword id="KW-1278">Translocase</keyword>
<keyword id="KW-0830">Ubiquinone</keyword>
<dbReference type="EC" id="7.1.1.-" evidence="1"/>
<dbReference type="EMBL" id="CP000319">
    <property type="protein sequence ID" value="ABE63004.1"/>
    <property type="molecule type" value="Genomic_DNA"/>
</dbReference>
<dbReference type="RefSeq" id="WP_011510681.1">
    <property type="nucleotide sequence ID" value="NC_007964.1"/>
</dbReference>
<dbReference type="SMR" id="Q1QL93"/>
<dbReference type="STRING" id="323097.Nham_2212"/>
<dbReference type="KEGG" id="nha:Nham_2212"/>
<dbReference type="eggNOG" id="COG1143">
    <property type="taxonomic scope" value="Bacteria"/>
</dbReference>
<dbReference type="HOGENOM" id="CLU_067218_5_1_5"/>
<dbReference type="OrthoDB" id="9808559at2"/>
<dbReference type="Proteomes" id="UP000001953">
    <property type="component" value="Chromosome"/>
</dbReference>
<dbReference type="GO" id="GO:0005886">
    <property type="term" value="C:plasma membrane"/>
    <property type="evidence" value="ECO:0007669"/>
    <property type="project" value="UniProtKB-SubCell"/>
</dbReference>
<dbReference type="GO" id="GO:0051539">
    <property type="term" value="F:4 iron, 4 sulfur cluster binding"/>
    <property type="evidence" value="ECO:0007669"/>
    <property type="project" value="UniProtKB-KW"/>
</dbReference>
<dbReference type="GO" id="GO:0005506">
    <property type="term" value="F:iron ion binding"/>
    <property type="evidence" value="ECO:0007669"/>
    <property type="project" value="UniProtKB-UniRule"/>
</dbReference>
<dbReference type="GO" id="GO:0050136">
    <property type="term" value="F:NADH:ubiquinone reductase (non-electrogenic) activity"/>
    <property type="evidence" value="ECO:0007669"/>
    <property type="project" value="UniProtKB-UniRule"/>
</dbReference>
<dbReference type="GO" id="GO:0048038">
    <property type="term" value="F:quinone binding"/>
    <property type="evidence" value="ECO:0007669"/>
    <property type="project" value="UniProtKB-KW"/>
</dbReference>
<dbReference type="GO" id="GO:0009060">
    <property type="term" value="P:aerobic respiration"/>
    <property type="evidence" value="ECO:0007669"/>
    <property type="project" value="TreeGrafter"/>
</dbReference>
<dbReference type="FunFam" id="3.30.70.3270:FF:000001">
    <property type="entry name" value="NADH-quinone oxidoreductase subunit I 1"/>
    <property type="match status" value="1"/>
</dbReference>
<dbReference type="Gene3D" id="3.30.70.3270">
    <property type="match status" value="1"/>
</dbReference>
<dbReference type="HAMAP" id="MF_01351">
    <property type="entry name" value="NDH1_NuoI"/>
    <property type="match status" value="1"/>
</dbReference>
<dbReference type="InterPro" id="IPR017896">
    <property type="entry name" value="4Fe4S_Fe-S-bd"/>
</dbReference>
<dbReference type="InterPro" id="IPR017900">
    <property type="entry name" value="4Fe4S_Fe_S_CS"/>
</dbReference>
<dbReference type="InterPro" id="IPR010226">
    <property type="entry name" value="NADH_quinone_OxRdtase_chainI"/>
</dbReference>
<dbReference type="NCBIfam" id="TIGR01971">
    <property type="entry name" value="NuoI"/>
    <property type="match status" value="1"/>
</dbReference>
<dbReference type="NCBIfam" id="NF004538">
    <property type="entry name" value="PRK05888.1-4"/>
    <property type="match status" value="1"/>
</dbReference>
<dbReference type="NCBIfam" id="NF004539">
    <property type="entry name" value="PRK05888.1-5"/>
    <property type="match status" value="1"/>
</dbReference>
<dbReference type="PANTHER" id="PTHR10849:SF20">
    <property type="entry name" value="NADH DEHYDROGENASE [UBIQUINONE] IRON-SULFUR PROTEIN 8, MITOCHONDRIAL"/>
    <property type="match status" value="1"/>
</dbReference>
<dbReference type="PANTHER" id="PTHR10849">
    <property type="entry name" value="NADH DEHYDROGENASE UBIQUINONE IRON-SULFUR PROTEIN 8, MITOCHONDRIAL"/>
    <property type="match status" value="1"/>
</dbReference>
<dbReference type="Pfam" id="PF12838">
    <property type="entry name" value="Fer4_7"/>
    <property type="match status" value="1"/>
</dbReference>
<dbReference type="SUPFAM" id="SSF54862">
    <property type="entry name" value="4Fe-4S ferredoxins"/>
    <property type="match status" value="1"/>
</dbReference>
<dbReference type="PROSITE" id="PS00198">
    <property type="entry name" value="4FE4S_FER_1"/>
    <property type="match status" value="2"/>
</dbReference>
<dbReference type="PROSITE" id="PS51379">
    <property type="entry name" value="4FE4S_FER_2"/>
    <property type="match status" value="2"/>
</dbReference>
<evidence type="ECO:0000255" key="1">
    <source>
        <dbReference type="HAMAP-Rule" id="MF_01351"/>
    </source>
</evidence>
<gene>
    <name evidence="1" type="primary">nuoI</name>
    <name type="ordered locus">Nham_2212</name>
</gene>
<protein>
    <recommendedName>
        <fullName evidence="1">NADH-quinone oxidoreductase subunit I</fullName>
        <ecNumber evidence="1">7.1.1.-</ecNumber>
    </recommendedName>
    <alternativeName>
        <fullName evidence="1">NADH dehydrogenase I subunit I</fullName>
    </alternativeName>
    <alternativeName>
        <fullName evidence="1">NDH-1 subunit I</fullName>
    </alternativeName>
</protein>
<comment type="function">
    <text evidence="1">NDH-1 shuttles electrons from NADH, via FMN and iron-sulfur (Fe-S) centers, to quinones in the respiratory chain. The immediate electron acceptor for the enzyme in this species is believed to be ubiquinone. Couples the redox reaction to proton translocation (for every two electrons transferred, four hydrogen ions are translocated across the cytoplasmic membrane), and thus conserves the redox energy in a proton gradient.</text>
</comment>
<comment type="catalytic activity">
    <reaction evidence="1">
        <text>a quinone + NADH + 5 H(+)(in) = a quinol + NAD(+) + 4 H(+)(out)</text>
        <dbReference type="Rhea" id="RHEA:57888"/>
        <dbReference type="ChEBI" id="CHEBI:15378"/>
        <dbReference type="ChEBI" id="CHEBI:24646"/>
        <dbReference type="ChEBI" id="CHEBI:57540"/>
        <dbReference type="ChEBI" id="CHEBI:57945"/>
        <dbReference type="ChEBI" id="CHEBI:132124"/>
    </reaction>
</comment>
<comment type="cofactor">
    <cofactor evidence="1">
        <name>[4Fe-4S] cluster</name>
        <dbReference type="ChEBI" id="CHEBI:49883"/>
    </cofactor>
    <text evidence="1">Binds 2 [4Fe-4S] clusters per subunit.</text>
</comment>
<comment type="subunit">
    <text evidence="1">NDH-1 is composed of 14 different subunits. Subunits NuoA, H, J, K, L, M, N constitute the membrane sector of the complex.</text>
</comment>
<comment type="subcellular location">
    <subcellularLocation>
        <location evidence="1">Cell inner membrane</location>
        <topology evidence="1">Peripheral membrane protein</topology>
    </subcellularLocation>
</comment>
<comment type="similarity">
    <text evidence="1">Belongs to the complex I 23 kDa subunit family.</text>
</comment>
<sequence length="162" mass="18631">MSINATARALLLTEFVSAFFLTMRYFFQPKATINYPFEKNPISPRFRGEHALRRYPNGEERCIACKLCEAICPAQAITIEAGPRRNDGTRRTVRYDIDMVKCIYCGLCQEACPVDAIVEGPNFEFATETREELYYDKAKLLANGDRWEREIAKAIELDAPYR</sequence>
<proteinExistence type="inferred from homology"/>